<protein>
    <recommendedName>
        <fullName>E3 ubiquitin-protein ligase TRIM9</fullName>
        <ecNumber evidence="2">2.3.2.27</ecNumber>
    </recommendedName>
    <alternativeName>
        <fullName evidence="11">RING-type E3 ubiquitin transferase TRIM9</fullName>
    </alternativeName>
    <alternativeName>
        <fullName>SNAP-25-interacting RING finger protein</fullName>
    </alternativeName>
    <alternativeName>
        <fullName>Tripartite motif-containing protein 9</fullName>
    </alternativeName>
</protein>
<dbReference type="EC" id="2.3.2.27" evidence="2"/>
<dbReference type="EMBL" id="AF350422">
    <property type="protein sequence ID" value="AAL27988.1"/>
    <property type="molecule type" value="mRNA"/>
</dbReference>
<dbReference type="RefSeq" id="NP_569104.1">
    <property type="nucleotide sequence ID" value="NM_130420.2"/>
</dbReference>
<dbReference type="BioGRID" id="250896">
    <property type="interactions" value="1"/>
</dbReference>
<dbReference type="FunCoup" id="Q91ZY8">
    <property type="interactions" value="1854"/>
</dbReference>
<dbReference type="IntAct" id="Q91ZY8">
    <property type="interactions" value="1"/>
</dbReference>
<dbReference type="MINT" id="Q91ZY8"/>
<dbReference type="STRING" id="10116.ENSRNOP00000009559"/>
<dbReference type="iPTMnet" id="Q91ZY8"/>
<dbReference type="PhosphoSitePlus" id="Q91ZY8"/>
<dbReference type="PaxDb" id="10116-ENSRNOP00000009559"/>
<dbReference type="Ensembl" id="ENSRNOT00000009560.3">
    <property type="protein sequence ID" value="ENSRNOP00000009559.1"/>
    <property type="gene ID" value="ENSRNOG00000007031.6"/>
</dbReference>
<dbReference type="GeneID" id="155812"/>
<dbReference type="KEGG" id="rno:155812"/>
<dbReference type="UCSC" id="RGD:621540">
    <property type="organism name" value="rat"/>
</dbReference>
<dbReference type="AGR" id="RGD:621540"/>
<dbReference type="CTD" id="114088"/>
<dbReference type="RGD" id="621540">
    <property type="gene designation" value="Trim9"/>
</dbReference>
<dbReference type="eggNOG" id="KOG4367">
    <property type="taxonomic scope" value="Eukaryota"/>
</dbReference>
<dbReference type="GeneTree" id="ENSGT00940000154071"/>
<dbReference type="HOGENOM" id="CLU_013137_19_2_1"/>
<dbReference type="InParanoid" id="Q91ZY8"/>
<dbReference type="OrthoDB" id="295536at2759"/>
<dbReference type="Reactome" id="R-RNO-983168">
    <property type="pathway name" value="Antigen processing: Ubiquitination &amp; Proteasome degradation"/>
</dbReference>
<dbReference type="UniPathway" id="UPA00143"/>
<dbReference type="PRO" id="PR:Q91ZY8"/>
<dbReference type="Proteomes" id="UP000002494">
    <property type="component" value="Chromosome 6"/>
</dbReference>
<dbReference type="Bgee" id="ENSRNOG00000007031">
    <property type="expression patterns" value="Expressed in frontal cortex and 6 other cell types or tissues"/>
</dbReference>
<dbReference type="GO" id="GO:0005737">
    <property type="term" value="C:cytoplasm"/>
    <property type="evidence" value="ECO:0000250"/>
    <property type="project" value="UniProtKB"/>
</dbReference>
<dbReference type="GO" id="GO:0005856">
    <property type="term" value="C:cytoskeleton"/>
    <property type="evidence" value="ECO:0007669"/>
    <property type="project" value="UniProtKB-SubCell"/>
</dbReference>
<dbReference type="GO" id="GO:0030425">
    <property type="term" value="C:dendrite"/>
    <property type="evidence" value="ECO:0000250"/>
    <property type="project" value="UniProtKB"/>
</dbReference>
<dbReference type="GO" id="GO:0099523">
    <property type="term" value="C:presynaptic cytosol"/>
    <property type="evidence" value="ECO:0000314"/>
    <property type="project" value="SynGO"/>
</dbReference>
<dbReference type="GO" id="GO:0008021">
    <property type="term" value="C:synaptic vesicle"/>
    <property type="evidence" value="ECO:0000314"/>
    <property type="project" value="RGD"/>
</dbReference>
<dbReference type="GO" id="GO:0019904">
    <property type="term" value="F:protein domain specific binding"/>
    <property type="evidence" value="ECO:0000266"/>
    <property type="project" value="RGD"/>
</dbReference>
<dbReference type="GO" id="GO:0042803">
    <property type="term" value="F:protein homodimerization activity"/>
    <property type="evidence" value="ECO:0000266"/>
    <property type="project" value="RGD"/>
</dbReference>
<dbReference type="GO" id="GO:0000149">
    <property type="term" value="F:SNARE binding"/>
    <property type="evidence" value="ECO:0000353"/>
    <property type="project" value="RGD"/>
</dbReference>
<dbReference type="GO" id="GO:0061630">
    <property type="term" value="F:ubiquitin protein ligase activity"/>
    <property type="evidence" value="ECO:0000250"/>
    <property type="project" value="UniProtKB"/>
</dbReference>
<dbReference type="GO" id="GO:0008270">
    <property type="term" value="F:zinc ion binding"/>
    <property type="evidence" value="ECO:0007669"/>
    <property type="project" value="UniProtKB-KW"/>
</dbReference>
<dbReference type="GO" id="GO:0045955">
    <property type="term" value="P:negative regulation of calcium ion-dependent exocytosis"/>
    <property type="evidence" value="ECO:0000315"/>
    <property type="project" value="RGD"/>
</dbReference>
<dbReference type="GO" id="GO:0035544">
    <property type="term" value="P:negative regulation of SNARE complex assembly"/>
    <property type="evidence" value="ECO:0000314"/>
    <property type="project" value="RGD"/>
</dbReference>
<dbReference type="GO" id="GO:0043161">
    <property type="term" value="P:proteasome-mediated ubiquitin-dependent protein catabolic process"/>
    <property type="evidence" value="ECO:0000250"/>
    <property type="project" value="UniProtKB"/>
</dbReference>
<dbReference type="GO" id="GO:0016567">
    <property type="term" value="P:protein ubiquitination"/>
    <property type="evidence" value="ECO:0007669"/>
    <property type="project" value="UniProtKB-UniPathway"/>
</dbReference>
<dbReference type="GO" id="GO:0016079">
    <property type="term" value="P:synaptic vesicle exocytosis"/>
    <property type="evidence" value="ECO:0000270"/>
    <property type="project" value="RGD"/>
</dbReference>
<dbReference type="CDD" id="cd19843">
    <property type="entry name" value="Bbox1_TRIM9_C-I"/>
    <property type="match status" value="1"/>
</dbReference>
<dbReference type="CDD" id="cd19826">
    <property type="entry name" value="Bbox2_TRIM9_C-I"/>
    <property type="match status" value="1"/>
</dbReference>
<dbReference type="CDD" id="cd00063">
    <property type="entry name" value="FN3"/>
    <property type="match status" value="1"/>
</dbReference>
<dbReference type="CDD" id="cd16755">
    <property type="entry name" value="RING-HC_TRIM9"/>
    <property type="match status" value="1"/>
</dbReference>
<dbReference type="CDD" id="cd12889">
    <property type="entry name" value="SPRY_PRY_TRIM67_9"/>
    <property type="match status" value="1"/>
</dbReference>
<dbReference type="FunFam" id="2.60.120.920:FF:000009">
    <property type="entry name" value="E3 ubiquitin-protein ligase TRIM9 isoform X1"/>
    <property type="match status" value="1"/>
</dbReference>
<dbReference type="FunFam" id="2.60.40.10:FF:000178">
    <property type="entry name" value="E3 ubiquitin-protein ligase TRIM9 isoform X1"/>
    <property type="match status" value="1"/>
</dbReference>
<dbReference type="FunFam" id="3.30.40.10:FF:000168">
    <property type="entry name" value="E3 ubiquitin-protein ligase TRIM9 isoform X1"/>
    <property type="match status" value="1"/>
</dbReference>
<dbReference type="FunFam" id="4.10.830.40:FF:000001">
    <property type="entry name" value="E3 ubiquitin-protein ligase TRIM9 isoform X1"/>
    <property type="match status" value="1"/>
</dbReference>
<dbReference type="FunFam" id="3.30.160.60:FF:000329">
    <property type="entry name" value="E3 ubiquitin-protein ligase TRIM9 isoform X2"/>
    <property type="match status" value="1"/>
</dbReference>
<dbReference type="FunFam" id="1.20.5.170:FF:000017">
    <property type="entry name" value="Putative E3 ubiquitin-protein ligase TRIM9"/>
    <property type="match status" value="1"/>
</dbReference>
<dbReference type="Gene3D" id="1.20.5.170">
    <property type="match status" value="1"/>
</dbReference>
<dbReference type="Gene3D" id="2.60.120.920">
    <property type="match status" value="1"/>
</dbReference>
<dbReference type="Gene3D" id="4.10.830.40">
    <property type="match status" value="1"/>
</dbReference>
<dbReference type="Gene3D" id="3.30.160.60">
    <property type="entry name" value="Classic Zinc Finger"/>
    <property type="match status" value="1"/>
</dbReference>
<dbReference type="Gene3D" id="2.60.40.10">
    <property type="entry name" value="Immunoglobulins"/>
    <property type="match status" value="1"/>
</dbReference>
<dbReference type="Gene3D" id="3.30.40.10">
    <property type="entry name" value="Zinc/RING finger domain, C3HC4 (zinc finger)"/>
    <property type="match status" value="1"/>
</dbReference>
<dbReference type="InterPro" id="IPR001870">
    <property type="entry name" value="B30.2/SPRY"/>
</dbReference>
<dbReference type="InterPro" id="IPR043136">
    <property type="entry name" value="B30.2/SPRY_sf"/>
</dbReference>
<dbReference type="InterPro" id="IPR003649">
    <property type="entry name" value="Bbox_C"/>
</dbReference>
<dbReference type="InterPro" id="IPR013320">
    <property type="entry name" value="ConA-like_dom_sf"/>
</dbReference>
<dbReference type="InterPro" id="IPR017903">
    <property type="entry name" value="COS_domain"/>
</dbReference>
<dbReference type="InterPro" id="IPR050617">
    <property type="entry name" value="E3_ligase_FN3/SPRY"/>
</dbReference>
<dbReference type="InterPro" id="IPR003961">
    <property type="entry name" value="FN3_dom"/>
</dbReference>
<dbReference type="InterPro" id="IPR036116">
    <property type="entry name" value="FN3_sf"/>
</dbReference>
<dbReference type="InterPro" id="IPR013783">
    <property type="entry name" value="Ig-like_fold"/>
</dbReference>
<dbReference type="InterPro" id="IPR003877">
    <property type="entry name" value="SPRY_dom"/>
</dbReference>
<dbReference type="InterPro" id="IPR049582">
    <property type="entry name" value="TRIM9_Bbox1"/>
</dbReference>
<dbReference type="InterPro" id="IPR027370">
    <property type="entry name" value="Znf-RING_euk"/>
</dbReference>
<dbReference type="InterPro" id="IPR000315">
    <property type="entry name" value="Znf_B-box"/>
</dbReference>
<dbReference type="InterPro" id="IPR001841">
    <property type="entry name" value="Znf_RING"/>
</dbReference>
<dbReference type="InterPro" id="IPR013083">
    <property type="entry name" value="Znf_RING/FYVE/PHD"/>
</dbReference>
<dbReference type="InterPro" id="IPR017907">
    <property type="entry name" value="Znf_RING_CS"/>
</dbReference>
<dbReference type="PANTHER" id="PTHR24099">
    <property type="entry name" value="E3 UBIQUITIN-PROTEIN LIGASE TRIM36-RELATED"/>
    <property type="match status" value="1"/>
</dbReference>
<dbReference type="PANTHER" id="PTHR24099:SF13">
    <property type="entry name" value="E3 UBIQUITIN-PROTEIN LIGASE TRIM9"/>
    <property type="match status" value="1"/>
</dbReference>
<dbReference type="Pfam" id="PF22586">
    <property type="entry name" value="ANCHR-like_BBOX"/>
    <property type="match status" value="1"/>
</dbReference>
<dbReference type="Pfam" id="PF00041">
    <property type="entry name" value="fn3"/>
    <property type="match status" value="1"/>
</dbReference>
<dbReference type="Pfam" id="PF00622">
    <property type="entry name" value="SPRY"/>
    <property type="match status" value="1"/>
</dbReference>
<dbReference type="Pfam" id="PF00643">
    <property type="entry name" value="zf-B_box"/>
    <property type="match status" value="1"/>
</dbReference>
<dbReference type="Pfam" id="PF13445">
    <property type="entry name" value="zf-RING_UBOX"/>
    <property type="match status" value="1"/>
</dbReference>
<dbReference type="SMART" id="SM00502">
    <property type="entry name" value="BBC"/>
    <property type="match status" value="1"/>
</dbReference>
<dbReference type="SMART" id="SM00336">
    <property type="entry name" value="BBOX"/>
    <property type="match status" value="2"/>
</dbReference>
<dbReference type="SMART" id="SM00060">
    <property type="entry name" value="FN3"/>
    <property type="match status" value="1"/>
</dbReference>
<dbReference type="SMART" id="SM00184">
    <property type="entry name" value="RING"/>
    <property type="match status" value="1"/>
</dbReference>
<dbReference type="SMART" id="SM00449">
    <property type="entry name" value="SPRY"/>
    <property type="match status" value="1"/>
</dbReference>
<dbReference type="SUPFAM" id="SSF57845">
    <property type="entry name" value="B-box zinc-binding domain"/>
    <property type="match status" value="1"/>
</dbReference>
<dbReference type="SUPFAM" id="SSF49899">
    <property type="entry name" value="Concanavalin A-like lectins/glucanases"/>
    <property type="match status" value="1"/>
</dbReference>
<dbReference type="SUPFAM" id="SSF49265">
    <property type="entry name" value="Fibronectin type III"/>
    <property type="match status" value="1"/>
</dbReference>
<dbReference type="SUPFAM" id="SSF57850">
    <property type="entry name" value="RING/U-box"/>
    <property type="match status" value="1"/>
</dbReference>
<dbReference type="PROSITE" id="PS50188">
    <property type="entry name" value="B302_SPRY"/>
    <property type="match status" value="1"/>
</dbReference>
<dbReference type="PROSITE" id="PS51262">
    <property type="entry name" value="COS"/>
    <property type="match status" value="1"/>
</dbReference>
<dbReference type="PROSITE" id="PS50853">
    <property type="entry name" value="FN3"/>
    <property type="match status" value="1"/>
</dbReference>
<dbReference type="PROSITE" id="PS50119">
    <property type="entry name" value="ZF_BBOX"/>
    <property type="match status" value="2"/>
</dbReference>
<dbReference type="PROSITE" id="PS00518">
    <property type="entry name" value="ZF_RING_1"/>
    <property type="match status" value="1"/>
</dbReference>
<dbReference type="PROSITE" id="PS50089">
    <property type="entry name" value="ZF_RING_2"/>
    <property type="match status" value="1"/>
</dbReference>
<keyword id="KW-0966">Cell projection</keyword>
<keyword id="KW-0175">Coiled coil</keyword>
<keyword id="KW-0963">Cytoplasm</keyword>
<keyword id="KW-0968">Cytoplasmic vesicle</keyword>
<keyword id="KW-0206">Cytoskeleton</keyword>
<keyword id="KW-0479">Metal-binding</keyword>
<keyword id="KW-0597">Phosphoprotein</keyword>
<keyword id="KW-1185">Reference proteome</keyword>
<keyword id="KW-0677">Repeat</keyword>
<keyword id="KW-0770">Synapse</keyword>
<keyword id="KW-0808">Transferase</keyword>
<keyword id="KW-0832">Ubl conjugation</keyword>
<keyword id="KW-0833">Ubl conjugation pathway</keyword>
<keyword id="KW-0862">Zinc</keyword>
<keyword id="KW-0863">Zinc-finger</keyword>
<organism>
    <name type="scientific">Rattus norvegicus</name>
    <name type="common">Rat</name>
    <dbReference type="NCBI Taxonomy" id="10116"/>
    <lineage>
        <taxon>Eukaryota</taxon>
        <taxon>Metazoa</taxon>
        <taxon>Chordata</taxon>
        <taxon>Craniata</taxon>
        <taxon>Vertebrata</taxon>
        <taxon>Euteleostomi</taxon>
        <taxon>Mammalia</taxon>
        <taxon>Eutheria</taxon>
        <taxon>Euarchontoglires</taxon>
        <taxon>Glires</taxon>
        <taxon>Rodentia</taxon>
        <taxon>Myomorpha</taxon>
        <taxon>Muroidea</taxon>
        <taxon>Muridae</taxon>
        <taxon>Murinae</taxon>
        <taxon>Rattus</taxon>
    </lineage>
</organism>
<accession>Q91ZY8</accession>
<comment type="function">
    <text evidence="2">E3 ubiquitin-protein ligase which ubiquitinates itself in cooperation with an E2 enzyme UBE2D2/UBC4 and serves as a targeting signal for proteasomal degradation. May play a role in regulation of neuronal functions (By similarity). May act as a regulator of synaptic vesicle exocytosis by controlling the availability of SNAP25 for the SNARE complex formation.</text>
</comment>
<comment type="catalytic activity">
    <reaction evidence="2">
        <text>S-ubiquitinyl-[E2 ubiquitin-conjugating enzyme]-L-cysteine + [acceptor protein]-L-lysine = [E2 ubiquitin-conjugating enzyme]-L-cysteine + N(6)-ubiquitinyl-[acceptor protein]-L-lysine.</text>
        <dbReference type="EC" id="2.3.2.27"/>
    </reaction>
</comment>
<comment type="pathway">
    <text evidence="2">Protein modification; protein ubiquitination.</text>
</comment>
<comment type="subunit">
    <text evidence="9">Interacts with SNAP25.</text>
</comment>
<comment type="subcellular location">
    <subcellularLocation>
        <location evidence="9">Cytoplasmic vesicle</location>
        <location evidence="9">Secretory vesicle</location>
        <location evidence="9">Synaptic vesicle</location>
    </subcellularLocation>
    <subcellularLocation>
        <location evidence="9">Synapse</location>
    </subcellularLocation>
    <subcellularLocation>
        <location evidence="9">Cytoplasm</location>
        <location evidence="9">Cytoskeleton</location>
    </subcellularLocation>
    <subcellularLocation>
        <location evidence="2">Cytoplasm</location>
    </subcellularLocation>
    <subcellularLocation>
        <location evidence="2">Cell projection</location>
        <location evidence="2">Dendrite</location>
    </subcellularLocation>
    <text evidence="2 9">Found in proximal dendrites of pyramidal neurons in the cerebral cortex and hippocampus, and Purkinje cells in the cerebellum (By similarity). Enriched at synaptic terminals where it exists in a soluble form and a synaptic vesicle-associated form. Associated with the cytoskeleton (PubMed:11524423).</text>
</comment>
<comment type="tissue specificity">
    <text evidence="10">Brain (at protein level). Expressed in fetal and adult brain.</text>
</comment>
<comment type="domain">
    <text>The coiled coil domain mediates the interaction with the N-terminal t-SNARE domain of SNAP25.</text>
</comment>
<comment type="PTM">
    <text evidence="2">Auto-ubiquitinated.</text>
</comment>
<proteinExistence type="evidence at protein level"/>
<reference key="1">
    <citation type="journal article" date="2001" name="J. Biol. Chem.">
        <title>Spring, a novel RING finger protein that regulates synaptic vesicle exocytosis.</title>
        <authorList>
            <person name="Li Y."/>
            <person name="Chin L.-S."/>
            <person name="Weigel C."/>
            <person name="Li L."/>
        </authorList>
    </citation>
    <scope>NUCLEOTIDE SEQUENCE [MRNA]</scope>
    <scope>INTERACTION WITH SNAP25</scope>
    <scope>SUBCELLULAR LOCATION</scope>
    <source>
        <strain>Sprague-Dawley</strain>
        <tissue>Hippocampus</tissue>
    </source>
</reference>
<reference key="2">
    <citation type="journal article" date="2010" name="Neurobiol. Dis.">
        <title>TRIM9, a novel brain-specific E3 ubiquitin ligase, is repressed in the brain of Parkinson's disease and dementia with Lewy bodies.</title>
        <authorList>
            <person name="Tanji K."/>
            <person name="Kamitani T."/>
            <person name="Mori F."/>
            <person name="Kakita A."/>
            <person name="Takahashi H."/>
            <person name="Wakabayashi K."/>
        </authorList>
    </citation>
    <scope>TISSUE SPECIFICITY</scope>
</reference>
<reference key="3">
    <citation type="journal article" date="2012" name="Nat. Commun.">
        <title>Quantitative maps of protein phosphorylation sites across 14 different rat organs and tissues.</title>
        <authorList>
            <person name="Lundby A."/>
            <person name="Secher A."/>
            <person name="Lage K."/>
            <person name="Nordsborg N.B."/>
            <person name="Dmytriyev A."/>
            <person name="Lundby C."/>
            <person name="Olsen J.V."/>
        </authorList>
    </citation>
    <scope>PHOSPHORYLATION [LARGE SCALE ANALYSIS] AT THR-41</scope>
    <scope>IDENTIFICATION BY MASS SPECTROMETRY [LARGE SCALE ANALYSIS]</scope>
</reference>
<gene>
    <name type="primary">Trim9</name>
    <name type="synonym">Spring</name>
</gene>
<evidence type="ECO:0000250" key="1">
    <source>
        <dbReference type="UniProtKB" id="Q8C7M3"/>
    </source>
</evidence>
<evidence type="ECO:0000250" key="2">
    <source>
        <dbReference type="UniProtKB" id="Q9C026"/>
    </source>
</evidence>
<evidence type="ECO:0000255" key="3"/>
<evidence type="ECO:0000255" key="4">
    <source>
        <dbReference type="PROSITE-ProRule" id="PRU00024"/>
    </source>
</evidence>
<evidence type="ECO:0000255" key="5">
    <source>
        <dbReference type="PROSITE-ProRule" id="PRU00175"/>
    </source>
</evidence>
<evidence type="ECO:0000255" key="6">
    <source>
        <dbReference type="PROSITE-ProRule" id="PRU00316"/>
    </source>
</evidence>
<evidence type="ECO:0000255" key="7">
    <source>
        <dbReference type="PROSITE-ProRule" id="PRU00548"/>
    </source>
</evidence>
<evidence type="ECO:0000255" key="8">
    <source>
        <dbReference type="PROSITE-ProRule" id="PRU00586"/>
    </source>
</evidence>
<evidence type="ECO:0000269" key="9">
    <source>
    </source>
</evidence>
<evidence type="ECO:0000269" key="10">
    <source>
    </source>
</evidence>
<evidence type="ECO:0000305" key="11"/>
<evidence type="ECO:0007744" key="12">
    <source>
    </source>
</evidence>
<name>TRIM9_RAT</name>
<feature type="chain" id="PRO_0000056210" description="E3 ubiquitin-protein ligase TRIM9">
    <location>
        <begin position="1"/>
        <end position="710"/>
    </location>
</feature>
<feature type="domain" description="COS" evidence="8">
    <location>
        <begin position="374"/>
        <end position="432"/>
    </location>
</feature>
<feature type="domain" description="Fibronectin type-III" evidence="6">
    <location>
        <begin position="440"/>
        <end position="535"/>
    </location>
</feature>
<feature type="domain" description="B30.2/SPRY" evidence="7">
    <location>
        <begin position="533"/>
        <end position="702"/>
    </location>
</feature>
<feature type="zinc finger region" description="RING-type" evidence="5">
    <location>
        <begin position="10"/>
        <end position="50"/>
    </location>
</feature>
<feature type="zinc finger region" description="B box-type 1" evidence="4">
    <location>
        <begin position="163"/>
        <end position="212"/>
    </location>
</feature>
<feature type="zinc finger region" description="B box-type 2" evidence="4">
    <location>
        <begin position="224"/>
        <end position="266"/>
    </location>
</feature>
<feature type="coiled-coil region" evidence="3">
    <location>
        <begin position="273"/>
        <end position="340"/>
    </location>
</feature>
<feature type="binding site" evidence="4">
    <location>
        <position position="168"/>
    </location>
    <ligand>
        <name>Zn(2+)</name>
        <dbReference type="ChEBI" id="CHEBI:29105"/>
        <label>1</label>
    </ligand>
</feature>
<feature type="binding site" evidence="4">
    <location>
        <position position="171"/>
    </location>
    <ligand>
        <name>Zn(2+)</name>
        <dbReference type="ChEBI" id="CHEBI:29105"/>
        <label>1</label>
    </ligand>
</feature>
<feature type="binding site" evidence="4">
    <location>
        <position position="193"/>
    </location>
    <ligand>
        <name>Zn(2+)</name>
        <dbReference type="ChEBI" id="CHEBI:29105"/>
        <label>1</label>
    </ligand>
</feature>
<feature type="binding site" evidence="4">
    <location>
        <position position="198"/>
    </location>
    <ligand>
        <name>Zn(2+)</name>
        <dbReference type="ChEBI" id="CHEBI:29105"/>
        <label>1</label>
    </ligand>
</feature>
<feature type="binding site" evidence="4">
    <location>
        <position position="229"/>
    </location>
    <ligand>
        <name>Zn(2+)</name>
        <dbReference type="ChEBI" id="CHEBI:29105"/>
        <label>2</label>
    </ligand>
</feature>
<feature type="binding site" evidence="4">
    <location>
        <position position="232"/>
    </location>
    <ligand>
        <name>Zn(2+)</name>
        <dbReference type="ChEBI" id="CHEBI:29105"/>
        <label>2</label>
    </ligand>
</feature>
<feature type="binding site" evidence="4">
    <location>
        <position position="252"/>
    </location>
    <ligand>
        <name>Zn(2+)</name>
        <dbReference type="ChEBI" id="CHEBI:29105"/>
        <label>2</label>
    </ligand>
</feature>
<feature type="binding site" evidence="4">
    <location>
        <position position="258"/>
    </location>
    <ligand>
        <name>Zn(2+)</name>
        <dbReference type="ChEBI" id="CHEBI:29105"/>
        <label>2</label>
    </ligand>
</feature>
<feature type="modified residue" description="Phosphothreonine" evidence="12">
    <location>
        <position position="41"/>
    </location>
</feature>
<feature type="modified residue" description="Phosphoserine" evidence="1">
    <location>
        <position position="44"/>
    </location>
</feature>
<feature type="modified residue" description="Phosphoserine" evidence="1">
    <location>
        <position position="46"/>
    </location>
</feature>
<feature type="modified residue" description="Phosphoserine" evidence="1">
    <location>
        <position position="49"/>
    </location>
</feature>
<feature type="modified residue" description="Phosphoserine" evidence="1">
    <location>
        <position position="53"/>
    </location>
</feature>
<sequence>MEEMEEELKCPVCGSFYREPIILPCSHNLCQACARNILVQTPESESPQSRRASGSGVSDYDYLDLDKMSLYSEADSGYGSYGGFASAPTTPCQKSPNGVRVFPPAMPPPPTHLSPALAPVPRNSCITCPQCHRSLILDDRGLRGFPKNRVLEGVIDRYQQSKAAALKCQLCEKAPKEATVMCEQCDVFYCDPCRLRCHPPRGPLAKHRLVPPAQGRVSRRLSPRKVSTCTDHELENHSMYCVQCKMPVCYQCLEEGKHSSHEVKALGAMWKLHKSQLSQALNGLSDRAKEAKEFLVQLRTMVQQIQENSVEFEACLVAQCDALIDALNRRKAQLLARVNKEHEHKLKVVRDQISHCTVKLRQTTGLMEYCLEVIKENDPSGFLQISDALIRRVHLTEDQWGKGTLTPRMTTDFDLSLDNSPLLQSIHQLDFVQVKASSPVPATPILQLEECCTHNNSATLSWKQPPLSTVAADGYILELDDGSGGQFREVYVGKETMCTVDGLHFNSTYNARVKAFNKTGVSPYSKTLVLQTSEVAWFAFDPGSAHSDIIFSNDNLTVTCSSYDDRVVLGKTGFSKGVHYWELTIDRYDNHPDPAFGVARIDVMKDMMLGKDDKAWAMYVDNNRSWFMHNNSHTNRTEGGITKGATIGVLLDLNRKTLTFFVNNEQQGPIAFENVEGLFFPAVSLNRNVQVTLHTGLPVPDFYSSRASIA</sequence>